<dbReference type="EMBL" id="AM039952">
    <property type="protein sequence ID" value="CAJ24472.1"/>
    <property type="molecule type" value="Genomic_DNA"/>
</dbReference>
<dbReference type="RefSeq" id="WP_002811096.1">
    <property type="nucleotide sequence ID" value="NZ_CP017190.1"/>
</dbReference>
<dbReference type="SMR" id="Q3BRT9"/>
<dbReference type="STRING" id="456327.BJD11_08935"/>
<dbReference type="GeneID" id="98193709"/>
<dbReference type="KEGG" id="xcv:XCV2793"/>
<dbReference type="eggNOG" id="COG0291">
    <property type="taxonomic scope" value="Bacteria"/>
</dbReference>
<dbReference type="HOGENOM" id="CLU_169643_4_3_6"/>
<dbReference type="Proteomes" id="UP000007069">
    <property type="component" value="Chromosome"/>
</dbReference>
<dbReference type="GO" id="GO:0022625">
    <property type="term" value="C:cytosolic large ribosomal subunit"/>
    <property type="evidence" value="ECO:0007669"/>
    <property type="project" value="TreeGrafter"/>
</dbReference>
<dbReference type="GO" id="GO:0003735">
    <property type="term" value="F:structural constituent of ribosome"/>
    <property type="evidence" value="ECO:0007669"/>
    <property type="project" value="InterPro"/>
</dbReference>
<dbReference type="GO" id="GO:0006412">
    <property type="term" value="P:translation"/>
    <property type="evidence" value="ECO:0007669"/>
    <property type="project" value="UniProtKB-UniRule"/>
</dbReference>
<dbReference type="FunFam" id="4.10.410.60:FF:000001">
    <property type="entry name" value="50S ribosomal protein L35"/>
    <property type="match status" value="1"/>
</dbReference>
<dbReference type="Gene3D" id="4.10.410.60">
    <property type="match status" value="1"/>
</dbReference>
<dbReference type="HAMAP" id="MF_00514">
    <property type="entry name" value="Ribosomal_bL35"/>
    <property type="match status" value="1"/>
</dbReference>
<dbReference type="InterPro" id="IPR001706">
    <property type="entry name" value="Ribosomal_bL35"/>
</dbReference>
<dbReference type="InterPro" id="IPR021137">
    <property type="entry name" value="Ribosomal_bL35-like"/>
</dbReference>
<dbReference type="InterPro" id="IPR018265">
    <property type="entry name" value="Ribosomal_bL35_CS"/>
</dbReference>
<dbReference type="InterPro" id="IPR037229">
    <property type="entry name" value="Ribosomal_bL35_sf"/>
</dbReference>
<dbReference type="NCBIfam" id="TIGR00001">
    <property type="entry name" value="rpmI_bact"/>
    <property type="match status" value="1"/>
</dbReference>
<dbReference type="PANTHER" id="PTHR33343">
    <property type="entry name" value="54S RIBOSOMAL PROTEIN BL35M"/>
    <property type="match status" value="1"/>
</dbReference>
<dbReference type="PANTHER" id="PTHR33343:SF1">
    <property type="entry name" value="LARGE RIBOSOMAL SUBUNIT PROTEIN BL35M"/>
    <property type="match status" value="1"/>
</dbReference>
<dbReference type="Pfam" id="PF01632">
    <property type="entry name" value="Ribosomal_L35p"/>
    <property type="match status" value="1"/>
</dbReference>
<dbReference type="PRINTS" id="PR00064">
    <property type="entry name" value="RIBOSOMALL35"/>
</dbReference>
<dbReference type="SUPFAM" id="SSF143034">
    <property type="entry name" value="L35p-like"/>
    <property type="match status" value="1"/>
</dbReference>
<dbReference type="PROSITE" id="PS00936">
    <property type="entry name" value="RIBOSOMAL_L35"/>
    <property type="match status" value="1"/>
</dbReference>
<proteinExistence type="inferred from homology"/>
<protein>
    <recommendedName>
        <fullName evidence="1">Large ribosomal subunit protein bL35</fullName>
    </recommendedName>
    <alternativeName>
        <fullName evidence="2">50S ribosomal protein L35</fullName>
    </alternativeName>
</protein>
<gene>
    <name evidence="1" type="primary">rpmI</name>
    <name type="ordered locus">XCV2793</name>
</gene>
<sequence>MPKIKTNRAAAKRFRKTASGKYKCGHANRSHILTKKATKRKRNLRQTNHVRAEDAGRLDRMLPYL</sequence>
<evidence type="ECO:0000255" key="1">
    <source>
        <dbReference type="HAMAP-Rule" id="MF_00514"/>
    </source>
</evidence>
<evidence type="ECO:0000305" key="2"/>
<reference key="1">
    <citation type="journal article" date="2005" name="J. Bacteriol.">
        <title>Insights into genome plasticity and pathogenicity of the plant pathogenic Bacterium Xanthomonas campestris pv. vesicatoria revealed by the complete genome sequence.</title>
        <authorList>
            <person name="Thieme F."/>
            <person name="Koebnik R."/>
            <person name="Bekel T."/>
            <person name="Berger C."/>
            <person name="Boch J."/>
            <person name="Buettner D."/>
            <person name="Caldana C."/>
            <person name="Gaigalat L."/>
            <person name="Goesmann A."/>
            <person name="Kay S."/>
            <person name="Kirchner O."/>
            <person name="Lanz C."/>
            <person name="Linke B."/>
            <person name="McHardy A.C."/>
            <person name="Meyer F."/>
            <person name="Mittenhuber G."/>
            <person name="Nies D.H."/>
            <person name="Niesbach-Kloesgen U."/>
            <person name="Patschkowski T."/>
            <person name="Rueckert C."/>
            <person name="Rupp O."/>
            <person name="Schneiker S."/>
            <person name="Schuster S.C."/>
            <person name="Vorhoelter F.J."/>
            <person name="Weber E."/>
            <person name="Puehler A."/>
            <person name="Bonas U."/>
            <person name="Bartels D."/>
            <person name="Kaiser O."/>
        </authorList>
    </citation>
    <scope>NUCLEOTIDE SEQUENCE [LARGE SCALE GENOMIC DNA]</scope>
    <source>
        <strain>85-10</strain>
    </source>
</reference>
<comment type="similarity">
    <text evidence="1">Belongs to the bacterial ribosomal protein bL35 family.</text>
</comment>
<accession>Q3BRT9</accession>
<keyword id="KW-0687">Ribonucleoprotein</keyword>
<keyword id="KW-0689">Ribosomal protein</keyword>
<feature type="chain" id="PRO_0000258784" description="Large ribosomal subunit protein bL35">
    <location>
        <begin position="1"/>
        <end position="65"/>
    </location>
</feature>
<name>RL35_XANE5</name>
<organism>
    <name type="scientific">Xanthomonas euvesicatoria pv. vesicatoria (strain 85-10)</name>
    <name type="common">Xanthomonas campestris pv. vesicatoria</name>
    <dbReference type="NCBI Taxonomy" id="316273"/>
    <lineage>
        <taxon>Bacteria</taxon>
        <taxon>Pseudomonadati</taxon>
        <taxon>Pseudomonadota</taxon>
        <taxon>Gammaproteobacteria</taxon>
        <taxon>Lysobacterales</taxon>
        <taxon>Lysobacteraceae</taxon>
        <taxon>Xanthomonas</taxon>
    </lineage>
</organism>